<protein>
    <recommendedName>
        <fullName evidence="1">3-deoxy-manno-octulosonate cytidylyltransferase</fullName>
        <ecNumber evidence="1">2.7.7.38</ecNumber>
    </recommendedName>
    <alternativeName>
        <fullName evidence="1">CMP-2-keto-3-deoxyoctulosonic acid synthase</fullName>
        <shortName evidence="1">CKS</shortName>
        <shortName evidence="1">CMP-KDO synthase</shortName>
    </alternativeName>
</protein>
<keyword id="KW-0963">Cytoplasm</keyword>
<keyword id="KW-0448">Lipopolysaccharide biosynthesis</keyword>
<keyword id="KW-0548">Nucleotidyltransferase</keyword>
<keyword id="KW-0808">Transferase</keyword>
<gene>
    <name evidence="1" type="primary">kdsB</name>
    <name type="ordered locus">Patl_1783</name>
</gene>
<proteinExistence type="inferred from homology"/>
<comment type="function">
    <text evidence="1">Activates KDO (a required 8-carbon sugar) for incorporation into bacterial lipopolysaccharide in Gram-negative bacteria.</text>
</comment>
<comment type="catalytic activity">
    <reaction evidence="1">
        <text>3-deoxy-alpha-D-manno-oct-2-ulosonate + CTP = CMP-3-deoxy-beta-D-manno-octulosonate + diphosphate</text>
        <dbReference type="Rhea" id="RHEA:23448"/>
        <dbReference type="ChEBI" id="CHEBI:33019"/>
        <dbReference type="ChEBI" id="CHEBI:37563"/>
        <dbReference type="ChEBI" id="CHEBI:85986"/>
        <dbReference type="ChEBI" id="CHEBI:85987"/>
        <dbReference type="EC" id="2.7.7.38"/>
    </reaction>
</comment>
<comment type="pathway">
    <text evidence="1">Nucleotide-sugar biosynthesis; CMP-3-deoxy-D-manno-octulosonate biosynthesis; CMP-3-deoxy-D-manno-octulosonate from 3-deoxy-D-manno-octulosonate and CTP: step 1/1.</text>
</comment>
<comment type="pathway">
    <text evidence="1">Bacterial outer membrane biogenesis; lipopolysaccharide biosynthesis.</text>
</comment>
<comment type="subcellular location">
    <subcellularLocation>
        <location evidence="1">Cytoplasm</location>
    </subcellularLocation>
</comment>
<comment type="similarity">
    <text evidence="1">Belongs to the KdsB family.</text>
</comment>
<evidence type="ECO:0000255" key="1">
    <source>
        <dbReference type="HAMAP-Rule" id="MF_00057"/>
    </source>
</evidence>
<name>KDSB_PSEA6</name>
<feature type="chain" id="PRO_1000003372" description="3-deoxy-manno-octulosonate cytidylyltransferase">
    <location>
        <begin position="1"/>
        <end position="254"/>
    </location>
</feature>
<sequence length="254" mass="28526">MNFNVIIPARYASTRFPGKPLVEINGKPMVQHVYDRAIESGASNVIVATDDARIAKAVSDFGGKYCMTGAHHESGTERLAEVVEMQDMLSQEIVVNVQGDEPFIPAENIQQVAENLHHHQQAEMATLAVKIVDVEEAFNPNAVKVVLDKQGYAMYFTRATIPYDRARFLDEDIIDEIGDYYLRHVGIYAYRAGFIKQYVNMSPSGLEQIESLEQLRVLWHGEKIHVDIARKTPPAGIDTPEDLKRILADPSLKF</sequence>
<reference key="1">
    <citation type="submission" date="2006-06" db="EMBL/GenBank/DDBJ databases">
        <title>Complete sequence of Pseudoalteromonas atlantica T6c.</title>
        <authorList>
            <consortium name="US DOE Joint Genome Institute"/>
            <person name="Copeland A."/>
            <person name="Lucas S."/>
            <person name="Lapidus A."/>
            <person name="Barry K."/>
            <person name="Detter J.C."/>
            <person name="Glavina del Rio T."/>
            <person name="Hammon N."/>
            <person name="Israni S."/>
            <person name="Dalin E."/>
            <person name="Tice H."/>
            <person name="Pitluck S."/>
            <person name="Saunders E."/>
            <person name="Brettin T."/>
            <person name="Bruce D."/>
            <person name="Han C."/>
            <person name="Tapia R."/>
            <person name="Gilna P."/>
            <person name="Schmutz J."/>
            <person name="Larimer F."/>
            <person name="Land M."/>
            <person name="Hauser L."/>
            <person name="Kyrpides N."/>
            <person name="Kim E."/>
            <person name="Karls A.C."/>
            <person name="Bartlett D."/>
            <person name="Higgins B.P."/>
            <person name="Richardson P."/>
        </authorList>
    </citation>
    <scope>NUCLEOTIDE SEQUENCE [LARGE SCALE GENOMIC DNA]</scope>
    <source>
        <strain>T6c / ATCC BAA-1087</strain>
    </source>
</reference>
<accession>Q15UY4</accession>
<organism>
    <name type="scientific">Pseudoalteromonas atlantica (strain T6c / ATCC BAA-1087)</name>
    <dbReference type="NCBI Taxonomy" id="3042615"/>
    <lineage>
        <taxon>Bacteria</taxon>
        <taxon>Pseudomonadati</taxon>
        <taxon>Pseudomonadota</taxon>
        <taxon>Gammaproteobacteria</taxon>
        <taxon>Alteromonadales</taxon>
        <taxon>Alteromonadaceae</taxon>
        <taxon>Paraglaciecola</taxon>
    </lineage>
</organism>
<dbReference type="EC" id="2.7.7.38" evidence="1"/>
<dbReference type="EMBL" id="CP000388">
    <property type="protein sequence ID" value="ABG40304.1"/>
    <property type="molecule type" value="Genomic_DNA"/>
</dbReference>
<dbReference type="RefSeq" id="WP_011574604.1">
    <property type="nucleotide sequence ID" value="NC_008228.1"/>
</dbReference>
<dbReference type="SMR" id="Q15UY4"/>
<dbReference type="STRING" id="342610.Patl_1783"/>
<dbReference type="KEGG" id="pat:Patl_1783"/>
<dbReference type="eggNOG" id="COG1212">
    <property type="taxonomic scope" value="Bacteria"/>
</dbReference>
<dbReference type="HOGENOM" id="CLU_065038_1_0_6"/>
<dbReference type="OrthoDB" id="9815559at2"/>
<dbReference type="UniPathway" id="UPA00030"/>
<dbReference type="UniPathway" id="UPA00358">
    <property type="reaction ID" value="UER00476"/>
</dbReference>
<dbReference type="Proteomes" id="UP000001981">
    <property type="component" value="Chromosome"/>
</dbReference>
<dbReference type="GO" id="GO:0005829">
    <property type="term" value="C:cytosol"/>
    <property type="evidence" value="ECO:0007669"/>
    <property type="project" value="TreeGrafter"/>
</dbReference>
<dbReference type="GO" id="GO:0008690">
    <property type="term" value="F:3-deoxy-manno-octulosonate cytidylyltransferase activity"/>
    <property type="evidence" value="ECO:0007669"/>
    <property type="project" value="UniProtKB-UniRule"/>
</dbReference>
<dbReference type="GO" id="GO:0033468">
    <property type="term" value="P:CMP-keto-3-deoxy-D-manno-octulosonic acid biosynthetic process"/>
    <property type="evidence" value="ECO:0007669"/>
    <property type="project" value="UniProtKB-UniRule"/>
</dbReference>
<dbReference type="GO" id="GO:0009103">
    <property type="term" value="P:lipopolysaccharide biosynthetic process"/>
    <property type="evidence" value="ECO:0007669"/>
    <property type="project" value="UniProtKB-UniRule"/>
</dbReference>
<dbReference type="CDD" id="cd02517">
    <property type="entry name" value="CMP-KDO-Synthetase"/>
    <property type="match status" value="1"/>
</dbReference>
<dbReference type="FunFam" id="3.90.550.10:FF:000011">
    <property type="entry name" value="3-deoxy-manno-octulosonate cytidylyltransferase"/>
    <property type="match status" value="1"/>
</dbReference>
<dbReference type="Gene3D" id="3.90.550.10">
    <property type="entry name" value="Spore Coat Polysaccharide Biosynthesis Protein SpsA, Chain A"/>
    <property type="match status" value="1"/>
</dbReference>
<dbReference type="HAMAP" id="MF_00057">
    <property type="entry name" value="KdsB"/>
    <property type="match status" value="1"/>
</dbReference>
<dbReference type="InterPro" id="IPR003329">
    <property type="entry name" value="Cytidylyl_trans"/>
</dbReference>
<dbReference type="InterPro" id="IPR004528">
    <property type="entry name" value="KdsB"/>
</dbReference>
<dbReference type="InterPro" id="IPR029044">
    <property type="entry name" value="Nucleotide-diphossugar_trans"/>
</dbReference>
<dbReference type="NCBIfam" id="TIGR00466">
    <property type="entry name" value="kdsB"/>
    <property type="match status" value="1"/>
</dbReference>
<dbReference type="NCBIfam" id="NF003950">
    <property type="entry name" value="PRK05450.1-3"/>
    <property type="match status" value="1"/>
</dbReference>
<dbReference type="NCBIfam" id="NF003952">
    <property type="entry name" value="PRK05450.1-5"/>
    <property type="match status" value="1"/>
</dbReference>
<dbReference type="NCBIfam" id="NF009905">
    <property type="entry name" value="PRK13368.1"/>
    <property type="match status" value="1"/>
</dbReference>
<dbReference type="PANTHER" id="PTHR42866">
    <property type="entry name" value="3-DEOXY-MANNO-OCTULOSONATE CYTIDYLYLTRANSFERASE"/>
    <property type="match status" value="1"/>
</dbReference>
<dbReference type="PANTHER" id="PTHR42866:SF2">
    <property type="entry name" value="3-DEOXY-MANNO-OCTULOSONATE CYTIDYLYLTRANSFERASE, MITOCHONDRIAL"/>
    <property type="match status" value="1"/>
</dbReference>
<dbReference type="Pfam" id="PF02348">
    <property type="entry name" value="CTP_transf_3"/>
    <property type="match status" value="1"/>
</dbReference>
<dbReference type="SUPFAM" id="SSF53448">
    <property type="entry name" value="Nucleotide-diphospho-sugar transferases"/>
    <property type="match status" value="1"/>
</dbReference>